<dbReference type="EMBL" id="CP000915">
    <property type="protein sequence ID" value="ACD30970.1"/>
    <property type="molecule type" value="Genomic_DNA"/>
</dbReference>
<dbReference type="SMR" id="B2SGW2"/>
<dbReference type="KEGG" id="ftm:FTM_1065"/>
<dbReference type="HOGENOM" id="CLU_082184_2_2_6"/>
<dbReference type="GO" id="GO:0022625">
    <property type="term" value="C:cytosolic large ribosomal subunit"/>
    <property type="evidence" value="ECO:0007669"/>
    <property type="project" value="TreeGrafter"/>
</dbReference>
<dbReference type="GO" id="GO:0003729">
    <property type="term" value="F:mRNA binding"/>
    <property type="evidence" value="ECO:0007669"/>
    <property type="project" value="TreeGrafter"/>
</dbReference>
<dbReference type="GO" id="GO:0003735">
    <property type="term" value="F:structural constituent of ribosome"/>
    <property type="evidence" value="ECO:0007669"/>
    <property type="project" value="InterPro"/>
</dbReference>
<dbReference type="GO" id="GO:0017148">
    <property type="term" value="P:negative regulation of translation"/>
    <property type="evidence" value="ECO:0007669"/>
    <property type="project" value="TreeGrafter"/>
</dbReference>
<dbReference type="GO" id="GO:0006412">
    <property type="term" value="P:translation"/>
    <property type="evidence" value="ECO:0007669"/>
    <property type="project" value="UniProtKB-UniRule"/>
</dbReference>
<dbReference type="CDD" id="cd00392">
    <property type="entry name" value="Ribosomal_L13"/>
    <property type="match status" value="1"/>
</dbReference>
<dbReference type="FunFam" id="3.90.1180.10:FF:000001">
    <property type="entry name" value="50S ribosomal protein L13"/>
    <property type="match status" value="1"/>
</dbReference>
<dbReference type="Gene3D" id="3.90.1180.10">
    <property type="entry name" value="Ribosomal protein L13"/>
    <property type="match status" value="1"/>
</dbReference>
<dbReference type="HAMAP" id="MF_01366">
    <property type="entry name" value="Ribosomal_uL13"/>
    <property type="match status" value="1"/>
</dbReference>
<dbReference type="InterPro" id="IPR005822">
    <property type="entry name" value="Ribosomal_uL13"/>
</dbReference>
<dbReference type="InterPro" id="IPR005823">
    <property type="entry name" value="Ribosomal_uL13_bac-type"/>
</dbReference>
<dbReference type="InterPro" id="IPR023563">
    <property type="entry name" value="Ribosomal_uL13_CS"/>
</dbReference>
<dbReference type="InterPro" id="IPR036899">
    <property type="entry name" value="Ribosomal_uL13_sf"/>
</dbReference>
<dbReference type="NCBIfam" id="TIGR01066">
    <property type="entry name" value="rplM_bact"/>
    <property type="match status" value="1"/>
</dbReference>
<dbReference type="PANTHER" id="PTHR11545:SF2">
    <property type="entry name" value="LARGE RIBOSOMAL SUBUNIT PROTEIN UL13M"/>
    <property type="match status" value="1"/>
</dbReference>
<dbReference type="PANTHER" id="PTHR11545">
    <property type="entry name" value="RIBOSOMAL PROTEIN L13"/>
    <property type="match status" value="1"/>
</dbReference>
<dbReference type="Pfam" id="PF00572">
    <property type="entry name" value="Ribosomal_L13"/>
    <property type="match status" value="1"/>
</dbReference>
<dbReference type="PIRSF" id="PIRSF002181">
    <property type="entry name" value="Ribosomal_L13"/>
    <property type="match status" value="1"/>
</dbReference>
<dbReference type="SUPFAM" id="SSF52161">
    <property type="entry name" value="Ribosomal protein L13"/>
    <property type="match status" value="1"/>
</dbReference>
<dbReference type="PROSITE" id="PS00783">
    <property type="entry name" value="RIBOSOMAL_L13"/>
    <property type="match status" value="1"/>
</dbReference>
<accession>B2SGW2</accession>
<comment type="function">
    <text evidence="1">This protein is one of the early assembly proteins of the 50S ribosomal subunit, although it is not seen to bind rRNA by itself. It is important during the early stages of 50S assembly.</text>
</comment>
<comment type="subunit">
    <text evidence="1">Part of the 50S ribosomal subunit.</text>
</comment>
<comment type="similarity">
    <text evidence="1">Belongs to the universal ribosomal protein uL13 family.</text>
</comment>
<feature type="chain" id="PRO_1000144133" description="Large ribosomal subunit protein uL13">
    <location>
        <begin position="1"/>
        <end position="142"/>
    </location>
</feature>
<organism>
    <name type="scientific">Francisella tularensis subsp. mediasiatica (strain FSC147)</name>
    <dbReference type="NCBI Taxonomy" id="441952"/>
    <lineage>
        <taxon>Bacteria</taxon>
        <taxon>Pseudomonadati</taxon>
        <taxon>Pseudomonadota</taxon>
        <taxon>Gammaproteobacteria</taxon>
        <taxon>Thiotrichales</taxon>
        <taxon>Francisellaceae</taxon>
        <taxon>Francisella</taxon>
    </lineage>
</organism>
<sequence length="142" mass="15938">MKTFTAKPSNIKREWLLIDATDKTLGRLATEVAMILRGKNKPEYTPHMDTGDYVVIVNAEKVAVTGNKRKAKTYYHHTGYIGGIKSVSFEKLIATHPERAIEKAVRGMLPRTPLGRTMFKKLKVYAGEAHPHTAQQPKAHNI</sequence>
<reference key="1">
    <citation type="journal article" date="2009" name="PLoS Pathog.">
        <title>Molecular evolutionary consequences of niche restriction in Francisella tularensis, a facultative intracellular pathogen.</title>
        <authorList>
            <person name="Larsson P."/>
            <person name="Elfsmark D."/>
            <person name="Svensson K."/>
            <person name="Wikstroem P."/>
            <person name="Forsman M."/>
            <person name="Brettin T."/>
            <person name="Keim P."/>
            <person name="Johansson A."/>
        </authorList>
    </citation>
    <scope>NUCLEOTIDE SEQUENCE [LARGE SCALE GENOMIC DNA]</scope>
    <source>
        <strain>FSC147</strain>
    </source>
</reference>
<keyword id="KW-0687">Ribonucleoprotein</keyword>
<keyword id="KW-0689">Ribosomal protein</keyword>
<protein>
    <recommendedName>
        <fullName evidence="1">Large ribosomal subunit protein uL13</fullName>
    </recommendedName>
    <alternativeName>
        <fullName evidence="2">50S ribosomal protein L13</fullName>
    </alternativeName>
</protein>
<name>RL13_FRATM</name>
<proteinExistence type="inferred from homology"/>
<gene>
    <name evidence="1" type="primary">rplM</name>
    <name type="ordered locus">FTM_1065</name>
</gene>
<evidence type="ECO:0000255" key="1">
    <source>
        <dbReference type="HAMAP-Rule" id="MF_01366"/>
    </source>
</evidence>
<evidence type="ECO:0000305" key="2"/>